<accession>A0A0E4AE82</accession>
<gene>
    <name evidence="4" type="primary">aqdC2</name>
    <name evidence="6" type="ORF">XU06_29740</name>
</gene>
<protein>
    <recommendedName>
        <fullName evidence="5">2-heptyl-3-hydroxy-4-quinolone dioxygenase AqdC2</fullName>
        <shortName evidence="4">PQS dioxygenase</shortName>
        <ecNumber evidence="3">1.13.11.-</ecNumber>
    </recommendedName>
</protein>
<proteinExistence type="evidence at protein level"/>
<reference key="1">
    <citation type="journal article" date="2015" name="J. Biotechnol.">
        <title>Complete genome sequence of Rhodococcus erythropolis BG43 (DSM 46869), a degrader of Pseudomonas aeruginosa quorum sensing signal molecules.</title>
        <authorList>
            <person name="Rueckert C."/>
            <person name="Birmes F.S."/>
            <person name="Mueller C."/>
            <person name="Niewerth H."/>
            <person name="Winkler A."/>
            <person name="Fetzner S."/>
            <person name="Kalinowski J."/>
        </authorList>
    </citation>
    <scope>NUCLEOTIDE SEQUENCE [LARGE SCALE GENOMIC DNA]</scope>
    <source>
        <strain>DSM 46869 / BG43</strain>
    </source>
</reference>
<reference key="2">
    <citation type="journal article" date="2015" name="Appl. Environ. Microbiol.">
        <title>Rhodococcus erythropolis BG43 genes mediating Pseudomonas aeruginosa quinolone signal degradation and virulence factor attenuation.</title>
        <authorList>
            <person name="Mueller C."/>
            <person name="Birmes F.S."/>
            <person name="Rueckert C."/>
            <person name="Kalinowski J."/>
            <person name="Fetzner S."/>
        </authorList>
    </citation>
    <scope>FUNCTION</scope>
    <scope>CATALYTIC ACTIVITY</scope>
    <scope>INDUCTION</scope>
    <source>
        <strain>DSM 46869 / BG43</strain>
    </source>
</reference>
<comment type="function">
    <text evidence="3">Involved in the degradation of the Pseudomonas aeruginosa quorum sensing signal molecules HHQ (2-heptyl-4-quinolone) and PQS (2-heptyl-3-hydroxy-4-quinolone) to anthranilic acid. Catalyzes the cleavage of PQS to form N-octanoylanthranilic acid and carbon monoxide.</text>
</comment>
<comment type="catalytic activity">
    <reaction evidence="3">
        <text>2-heptyl-3-hydroxy-4(1H)-quinolone + O2 = N-octanoylanthranilate + CO + H(+)</text>
        <dbReference type="Rhea" id="RHEA:60352"/>
        <dbReference type="ChEBI" id="CHEBI:15378"/>
        <dbReference type="ChEBI" id="CHEBI:15379"/>
        <dbReference type="ChEBI" id="CHEBI:17245"/>
        <dbReference type="ChEBI" id="CHEBI:29472"/>
        <dbReference type="ChEBI" id="CHEBI:143722"/>
    </reaction>
    <physiologicalReaction direction="left-to-right" evidence="3">
        <dbReference type="Rhea" id="RHEA:60353"/>
    </physiologicalReaction>
</comment>
<comment type="induction">
    <text evidence="3">Up-regulated by PQS.</text>
</comment>
<comment type="similarity">
    <text evidence="5">Belongs to the AB hydrolase superfamily.</text>
</comment>
<organism>
    <name type="scientific">Rhodococcus erythropolis</name>
    <name type="common">Arthrobacter picolinophilus</name>
    <dbReference type="NCBI Taxonomy" id="1833"/>
    <lineage>
        <taxon>Bacteria</taxon>
        <taxon>Bacillati</taxon>
        <taxon>Actinomycetota</taxon>
        <taxon>Actinomycetes</taxon>
        <taxon>Mycobacteriales</taxon>
        <taxon>Nocardiaceae</taxon>
        <taxon>Rhodococcus</taxon>
        <taxon>Rhodococcus erythropolis group</taxon>
    </lineage>
</organism>
<sequence>MTALMTLNGVRIEYQDIGTSSAGKPALVLLTGWGHDLRYYRRLIPHLAPEFRVVALSWRGHDADRTLVGDYGVHEQTADTIALLDAIGVDVFVPVAHAHGGWVALQLADELGVQRVPRVLIADLIMTTIPSDFAAAVRDLQKPDRWKSARAGLAKSWLSGGVTLPLLKHLLIESRGFGFDTWARSGRVIEDAYNRWGSPMGRMEQLNEPRPIRHVFSHPKTSSYDELHVAFRGRHPWFSHRRLAGRTHFPAHELPREIATEIRAFVNEST</sequence>
<name>AQDC2_RHOER</name>
<feature type="chain" id="PRO_0000447584" description="2-heptyl-3-hydroxy-4-quinolone dioxygenase AqdC2">
    <location>
        <begin position="1"/>
        <end position="270"/>
    </location>
</feature>
<feature type="domain" description="AB hydrolase-1" evidence="2">
    <location>
        <begin position="25"/>
        <end position="156"/>
    </location>
</feature>
<feature type="active site" description="Proton donor/acceptor" evidence="1">
    <location>
        <position position="248"/>
    </location>
</feature>
<feature type="binding site" evidence="1">
    <location>
        <position position="99"/>
    </location>
    <ligand>
        <name>substrate</name>
    </ligand>
</feature>
<feature type="site" description="Increases basicity of active site His" evidence="1">
    <location>
        <position position="123"/>
    </location>
</feature>
<keyword id="KW-0223">Dioxygenase</keyword>
<keyword id="KW-0560">Oxidoreductase</keyword>
<keyword id="KW-0614">Plasmid</keyword>
<dbReference type="EC" id="1.13.11.-" evidence="3"/>
<dbReference type="EMBL" id="CP011296">
    <property type="protein sequence ID" value="AKE01142.2"/>
    <property type="molecule type" value="Genomic_DNA"/>
</dbReference>
<dbReference type="RefSeq" id="WP_052741045.1">
    <property type="nucleotide sequence ID" value="NZ_CP011296.1"/>
</dbReference>
<dbReference type="SMR" id="A0A0E4AE82"/>
<dbReference type="ESTHER" id="rhoer-aqdC2">
    <property type="family name" value="HOD-cofactorfree-dioxygenase"/>
</dbReference>
<dbReference type="KEGG" id="reb:XU06_29740"/>
<dbReference type="PATRIC" id="fig|1833.80.peg.6125"/>
<dbReference type="GO" id="GO:0051213">
    <property type="term" value="F:dioxygenase activity"/>
    <property type="evidence" value="ECO:0007669"/>
    <property type="project" value="UniProtKB-KW"/>
</dbReference>
<dbReference type="Gene3D" id="1.10.210.20">
    <property type="match status" value="1"/>
</dbReference>
<dbReference type="Gene3D" id="3.40.50.1820">
    <property type="entry name" value="alpha/beta hydrolase"/>
    <property type="match status" value="1"/>
</dbReference>
<dbReference type="InterPro" id="IPR000073">
    <property type="entry name" value="AB_hydrolase_1"/>
</dbReference>
<dbReference type="InterPro" id="IPR029058">
    <property type="entry name" value="AB_hydrolase_fold"/>
</dbReference>
<dbReference type="PANTHER" id="PTHR43329">
    <property type="entry name" value="EPOXIDE HYDROLASE"/>
    <property type="match status" value="1"/>
</dbReference>
<dbReference type="Pfam" id="PF00561">
    <property type="entry name" value="Abhydrolase_1"/>
    <property type="match status" value="1"/>
</dbReference>
<dbReference type="SUPFAM" id="SSF53474">
    <property type="entry name" value="alpha/beta-Hydrolases"/>
    <property type="match status" value="1"/>
</dbReference>
<geneLocation type="plasmid">
    <name>pRLCBG43</name>
</geneLocation>
<evidence type="ECO:0000250" key="1">
    <source>
        <dbReference type="UniProtKB" id="B1MFK2"/>
    </source>
</evidence>
<evidence type="ECO:0000255" key="2"/>
<evidence type="ECO:0000269" key="3">
    <source>
    </source>
</evidence>
<evidence type="ECO:0000303" key="4">
    <source>
    </source>
</evidence>
<evidence type="ECO:0000305" key="5"/>
<evidence type="ECO:0000312" key="6">
    <source>
        <dbReference type="EMBL" id="AKE01142.2"/>
    </source>
</evidence>